<dbReference type="EMBL" id="CP000542">
    <property type="protein sequence ID" value="ABM60104.1"/>
    <property type="molecule type" value="Genomic_DNA"/>
</dbReference>
<dbReference type="RefSeq" id="WP_011812089.1">
    <property type="nucleotide sequence ID" value="NC_008786.1"/>
</dbReference>
<dbReference type="SMR" id="A1WR47"/>
<dbReference type="STRING" id="391735.Veis_4401"/>
<dbReference type="GeneID" id="76462712"/>
<dbReference type="KEGG" id="vei:Veis_4401"/>
<dbReference type="eggNOG" id="COG1914">
    <property type="taxonomic scope" value="Bacteria"/>
</dbReference>
<dbReference type="HOGENOM" id="CLU_020088_2_0_4"/>
<dbReference type="OrthoDB" id="9787548at2"/>
<dbReference type="Proteomes" id="UP000000374">
    <property type="component" value="Chromosome"/>
</dbReference>
<dbReference type="GO" id="GO:0005886">
    <property type="term" value="C:plasma membrane"/>
    <property type="evidence" value="ECO:0007669"/>
    <property type="project" value="UniProtKB-SubCell"/>
</dbReference>
<dbReference type="GO" id="GO:0015086">
    <property type="term" value="F:cadmium ion transmembrane transporter activity"/>
    <property type="evidence" value="ECO:0007669"/>
    <property type="project" value="TreeGrafter"/>
</dbReference>
<dbReference type="GO" id="GO:0005384">
    <property type="term" value="F:manganese ion transmembrane transporter activity"/>
    <property type="evidence" value="ECO:0007669"/>
    <property type="project" value="TreeGrafter"/>
</dbReference>
<dbReference type="GO" id="GO:0046872">
    <property type="term" value="F:metal ion binding"/>
    <property type="evidence" value="ECO:0007669"/>
    <property type="project" value="UniProtKB-UniRule"/>
</dbReference>
<dbReference type="GO" id="GO:0015293">
    <property type="term" value="F:symporter activity"/>
    <property type="evidence" value="ECO:0007669"/>
    <property type="project" value="UniProtKB-UniRule"/>
</dbReference>
<dbReference type="GO" id="GO:0034755">
    <property type="term" value="P:iron ion transmembrane transport"/>
    <property type="evidence" value="ECO:0007669"/>
    <property type="project" value="TreeGrafter"/>
</dbReference>
<dbReference type="HAMAP" id="MF_00221">
    <property type="entry name" value="NRAMP"/>
    <property type="match status" value="1"/>
</dbReference>
<dbReference type="InterPro" id="IPR001046">
    <property type="entry name" value="NRAMP_fam"/>
</dbReference>
<dbReference type="NCBIfam" id="TIGR01197">
    <property type="entry name" value="nramp"/>
    <property type="match status" value="1"/>
</dbReference>
<dbReference type="NCBIfam" id="NF037982">
    <property type="entry name" value="Nramp_1"/>
    <property type="match status" value="1"/>
</dbReference>
<dbReference type="NCBIfam" id="NF001923">
    <property type="entry name" value="PRK00701.1"/>
    <property type="match status" value="1"/>
</dbReference>
<dbReference type="PANTHER" id="PTHR11706:SF33">
    <property type="entry name" value="NATURAL RESISTANCE-ASSOCIATED MACROPHAGE PROTEIN 2"/>
    <property type="match status" value="1"/>
</dbReference>
<dbReference type="PANTHER" id="PTHR11706">
    <property type="entry name" value="SOLUTE CARRIER PROTEIN FAMILY 11 MEMBER"/>
    <property type="match status" value="1"/>
</dbReference>
<dbReference type="Pfam" id="PF01566">
    <property type="entry name" value="Nramp"/>
    <property type="match status" value="1"/>
</dbReference>
<dbReference type="PRINTS" id="PR00447">
    <property type="entry name" value="NATRESASSCMP"/>
</dbReference>
<protein>
    <recommendedName>
        <fullName evidence="1">Divalent metal cation transporter MntH</fullName>
    </recommendedName>
</protein>
<keyword id="KW-0997">Cell inner membrane</keyword>
<keyword id="KW-1003">Cell membrane</keyword>
<keyword id="KW-0406">Ion transport</keyword>
<keyword id="KW-0472">Membrane</keyword>
<keyword id="KW-1185">Reference proteome</keyword>
<keyword id="KW-0769">Symport</keyword>
<keyword id="KW-0812">Transmembrane</keyword>
<keyword id="KW-1133">Transmembrane helix</keyword>
<keyword id="KW-0813">Transport</keyword>
<sequence>MDDCVHKTVGSAARTERTALAVRAVLEGRRRGASMLLPFAGPAVVVSVAYMDPGNLATNIQAGARYGYALLWVVLLANVVAMLFQSLSAKLGIVTGRNLAELCRERFSRPVALAMWVVSEIAAMATDLAAFLGGAIGLSLLFRMPLLGGMVVTAIVTYGLLLLEDAGFRPLELAIGALVGIIGLSYLAELFITPIAWSSVLAHTVSPRFPDANALLIAVGIVGATVMPHALFLHSGLTQRRTPARTERERAVLLKFSNIEVVVALAIAGLINMAMVIMAAGAFHHGHPEVAEIETAYHTLAPLLGIGAAGVFLLSLIASGISSSVVGTMAGQIIMQGFVEFRIPLWLRRAVTMAPSFAVVALGVNVTQALVLSQVVLSLALPLPMAALLWFTCSREVMGAYKNRVFIAVIATLAACAVLAFNAVLILQTFGVDIPGLPG</sequence>
<organism>
    <name type="scientific">Verminephrobacter eiseniae (strain EF01-2)</name>
    <dbReference type="NCBI Taxonomy" id="391735"/>
    <lineage>
        <taxon>Bacteria</taxon>
        <taxon>Pseudomonadati</taxon>
        <taxon>Pseudomonadota</taxon>
        <taxon>Betaproteobacteria</taxon>
        <taxon>Burkholderiales</taxon>
        <taxon>Comamonadaceae</taxon>
        <taxon>Verminephrobacter</taxon>
    </lineage>
</organism>
<proteinExistence type="inferred from homology"/>
<feature type="chain" id="PRO_0000325611" description="Divalent metal cation transporter MntH">
    <location>
        <begin position="1"/>
        <end position="439"/>
    </location>
</feature>
<feature type="transmembrane region" description="Helical" evidence="1">
    <location>
        <begin position="32"/>
        <end position="52"/>
    </location>
</feature>
<feature type="transmembrane region" description="Helical" evidence="1">
    <location>
        <begin position="67"/>
        <end position="87"/>
    </location>
</feature>
<feature type="transmembrane region" description="Helical" evidence="1">
    <location>
        <begin position="121"/>
        <end position="141"/>
    </location>
</feature>
<feature type="transmembrane region" description="Helical" evidence="1">
    <location>
        <begin position="144"/>
        <end position="164"/>
    </location>
</feature>
<feature type="transmembrane region" description="Helical" evidence="1">
    <location>
        <begin position="173"/>
        <end position="193"/>
    </location>
</feature>
<feature type="transmembrane region" description="Helical" evidence="1">
    <location>
        <begin position="214"/>
        <end position="234"/>
    </location>
</feature>
<feature type="transmembrane region" description="Helical" evidence="1">
    <location>
        <begin position="261"/>
        <end position="281"/>
    </location>
</feature>
<feature type="transmembrane region" description="Helical" evidence="1">
    <location>
        <begin position="301"/>
        <end position="321"/>
    </location>
</feature>
<feature type="transmembrane region" description="Helical" evidence="1">
    <location>
        <begin position="350"/>
        <end position="370"/>
    </location>
</feature>
<feature type="transmembrane region" description="Helical" evidence="1">
    <location>
        <begin position="371"/>
        <end position="391"/>
    </location>
</feature>
<feature type="transmembrane region" description="Helical" evidence="1">
    <location>
        <begin position="406"/>
        <end position="426"/>
    </location>
</feature>
<accession>A1WR47</accession>
<comment type="function">
    <text evidence="1">H(+)-stimulated, divalent metal cation uptake system.</text>
</comment>
<comment type="subcellular location">
    <subcellularLocation>
        <location evidence="1">Cell inner membrane</location>
        <topology evidence="1">Multi-pass membrane protein</topology>
    </subcellularLocation>
</comment>
<comment type="similarity">
    <text evidence="1">Belongs to the NRAMP family.</text>
</comment>
<gene>
    <name evidence="1" type="primary">mntH</name>
    <name type="ordered locus">Veis_4401</name>
</gene>
<name>MNTH_VEREI</name>
<evidence type="ECO:0000255" key="1">
    <source>
        <dbReference type="HAMAP-Rule" id="MF_00221"/>
    </source>
</evidence>
<reference key="1">
    <citation type="submission" date="2006-12" db="EMBL/GenBank/DDBJ databases">
        <title>Complete sequence of chromosome 1 of Verminephrobacter eiseniae EF01-2.</title>
        <authorList>
            <person name="Copeland A."/>
            <person name="Lucas S."/>
            <person name="Lapidus A."/>
            <person name="Barry K."/>
            <person name="Detter J.C."/>
            <person name="Glavina del Rio T."/>
            <person name="Dalin E."/>
            <person name="Tice H."/>
            <person name="Pitluck S."/>
            <person name="Chertkov O."/>
            <person name="Brettin T."/>
            <person name="Bruce D."/>
            <person name="Han C."/>
            <person name="Tapia R."/>
            <person name="Gilna P."/>
            <person name="Schmutz J."/>
            <person name="Larimer F."/>
            <person name="Land M."/>
            <person name="Hauser L."/>
            <person name="Kyrpides N."/>
            <person name="Kim E."/>
            <person name="Stahl D."/>
            <person name="Richardson P."/>
        </authorList>
    </citation>
    <scope>NUCLEOTIDE SEQUENCE [LARGE SCALE GENOMIC DNA]</scope>
    <source>
        <strain>EF01-2</strain>
    </source>
</reference>